<evidence type="ECO:0000250" key="1">
    <source>
        <dbReference type="UniProtKB" id="O15511"/>
    </source>
</evidence>
<evidence type="ECO:0000256" key="2">
    <source>
        <dbReference type="SAM" id="MobiDB-lite"/>
    </source>
</evidence>
<evidence type="ECO:0000305" key="3"/>
<reference key="1">
    <citation type="journal article" date="2005" name="Science">
        <title>The transcriptional landscape of the mammalian genome.</title>
        <authorList>
            <person name="Carninci P."/>
            <person name="Kasukawa T."/>
            <person name="Katayama S."/>
            <person name="Gough J."/>
            <person name="Frith M.C."/>
            <person name="Maeda N."/>
            <person name="Oyama R."/>
            <person name="Ravasi T."/>
            <person name="Lenhard B."/>
            <person name="Wells C."/>
            <person name="Kodzius R."/>
            <person name="Shimokawa K."/>
            <person name="Bajic V.B."/>
            <person name="Brenner S.E."/>
            <person name="Batalov S."/>
            <person name="Forrest A.R."/>
            <person name="Zavolan M."/>
            <person name="Davis M.J."/>
            <person name="Wilming L.G."/>
            <person name="Aidinis V."/>
            <person name="Allen J.E."/>
            <person name="Ambesi-Impiombato A."/>
            <person name="Apweiler R."/>
            <person name="Aturaliya R.N."/>
            <person name="Bailey T.L."/>
            <person name="Bansal M."/>
            <person name="Baxter L."/>
            <person name="Beisel K.W."/>
            <person name="Bersano T."/>
            <person name="Bono H."/>
            <person name="Chalk A.M."/>
            <person name="Chiu K.P."/>
            <person name="Choudhary V."/>
            <person name="Christoffels A."/>
            <person name="Clutterbuck D.R."/>
            <person name="Crowe M.L."/>
            <person name="Dalla E."/>
            <person name="Dalrymple B.P."/>
            <person name="de Bono B."/>
            <person name="Della Gatta G."/>
            <person name="di Bernardo D."/>
            <person name="Down T."/>
            <person name="Engstrom P."/>
            <person name="Fagiolini M."/>
            <person name="Faulkner G."/>
            <person name="Fletcher C.F."/>
            <person name="Fukushima T."/>
            <person name="Furuno M."/>
            <person name="Futaki S."/>
            <person name="Gariboldi M."/>
            <person name="Georgii-Hemming P."/>
            <person name="Gingeras T.R."/>
            <person name="Gojobori T."/>
            <person name="Green R.E."/>
            <person name="Gustincich S."/>
            <person name="Harbers M."/>
            <person name="Hayashi Y."/>
            <person name="Hensch T.K."/>
            <person name="Hirokawa N."/>
            <person name="Hill D."/>
            <person name="Huminiecki L."/>
            <person name="Iacono M."/>
            <person name="Ikeo K."/>
            <person name="Iwama A."/>
            <person name="Ishikawa T."/>
            <person name="Jakt M."/>
            <person name="Kanapin A."/>
            <person name="Katoh M."/>
            <person name="Kawasawa Y."/>
            <person name="Kelso J."/>
            <person name="Kitamura H."/>
            <person name="Kitano H."/>
            <person name="Kollias G."/>
            <person name="Krishnan S.P."/>
            <person name="Kruger A."/>
            <person name="Kummerfeld S.K."/>
            <person name="Kurochkin I.V."/>
            <person name="Lareau L.F."/>
            <person name="Lazarevic D."/>
            <person name="Lipovich L."/>
            <person name="Liu J."/>
            <person name="Liuni S."/>
            <person name="McWilliam S."/>
            <person name="Madan Babu M."/>
            <person name="Madera M."/>
            <person name="Marchionni L."/>
            <person name="Matsuda H."/>
            <person name="Matsuzawa S."/>
            <person name="Miki H."/>
            <person name="Mignone F."/>
            <person name="Miyake S."/>
            <person name="Morris K."/>
            <person name="Mottagui-Tabar S."/>
            <person name="Mulder N."/>
            <person name="Nakano N."/>
            <person name="Nakauchi H."/>
            <person name="Ng P."/>
            <person name="Nilsson R."/>
            <person name="Nishiguchi S."/>
            <person name="Nishikawa S."/>
            <person name="Nori F."/>
            <person name="Ohara O."/>
            <person name="Okazaki Y."/>
            <person name="Orlando V."/>
            <person name="Pang K.C."/>
            <person name="Pavan W.J."/>
            <person name="Pavesi G."/>
            <person name="Pesole G."/>
            <person name="Petrovsky N."/>
            <person name="Piazza S."/>
            <person name="Reed J."/>
            <person name="Reid J.F."/>
            <person name="Ring B.Z."/>
            <person name="Ringwald M."/>
            <person name="Rost B."/>
            <person name="Ruan Y."/>
            <person name="Salzberg S.L."/>
            <person name="Sandelin A."/>
            <person name="Schneider C."/>
            <person name="Schoenbach C."/>
            <person name="Sekiguchi K."/>
            <person name="Semple C.A."/>
            <person name="Seno S."/>
            <person name="Sessa L."/>
            <person name="Sheng Y."/>
            <person name="Shibata Y."/>
            <person name="Shimada H."/>
            <person name="Shimada K."/>
            <person name="Silva D."/>
            <person name="Sinclair B."/>
            <person name="Sperling S."/>
            <person name="Stupka E."/>
            <person name="Sugiura K."/>
            <person name="Sultana R."/>
            <person name="Takenaka Y."/>
            <person name="Taki K."/>
            <person name="Tammoja K."/>
            <person name="Tan S.L."/>
            <person name="Tang S."/>
            <person name="Taylor M.S."/>
            <person name="Tegner J."/>
            <person name="Teichmann S.A."/>
            <person name="Ueda H.R."/>
            <person name="van Nimwegen E."/>
            <person name="Verardo R."/>
            <person name="Wei C.L."/>
            <person name="Yagi K."/>
            <person name="Yamanishi H."/>
            <person name="Zabarovsky E."/>
            <person name="Zhu S."/>
            <person name="Zimmer A."/>
            <person name="Hide W."/>
            <person name="Bult C."/>
            <person name="Grimmond S.M."/>
            <person name="Teasdale R.D."/>
            <person name="Liu E.T."/>
            <person name="Brusic V."/>
            <person name="Quackenbush J."/>
            <person name="Wahlestedt C."/>
            <person name="Mattick J.S."/>
            <person name="Hume D.A."/>
            <person name="Kai C."/>
            <person name="Sasaki D."/>
            <person name="Tomaru Y."/>
            <person name="Fukuda S."/>
            <person name="Kanamori-Katayama M."/>
            <person name="Suzuki M."/>
            <person name="Aoki J."/>
            <person name="Arakawa T."/>
            <person name="Iida J."/>
            <person name="Imamura K."/>
            <person name="Itoh M."/>
            <person name="Kato T."/>
            <person name="Kawaji H."/>
            <person name="Kawagashira N."/>
            <person name="Kawashima T."/>
            <person name="Kojima M."/>
            <person name="Kondo S."/>
            <person name="Konno H."/>
            <person name="Nakano K."/>
            <person name="Ninomiya N."/>
            <person name="Nishio T."/>
            <person name="Okada M."/>
            <person name="Plessy C."/>
            <person name="Shibata K."/>
            <person name="Shiraki T."/>
            <person name="Suzuki S."/>
            <person name="Tagami M."/>
            <person name="Waki K."/>
            <person name="Watahiki A."/>
            <person name="Okamura-Oho Y."/>
            <person name="Suzuki H."/>
            <person name="Kawai J."/>
            <person name="Hayashizaki Y."/>
        </authorList>
    </citation>
    <scope>NUCLEOTIDE SEQUENCE [LARGE SCALE MRNA]</scope>
    <source>
        <strain>BALB/cJ</strain>
        <strain>C57BL/6J</strain>
        <tissue>Amnion</tissue>
        <tissue>Bone marrow</tissue>
        <tissue>Eye</tissue>
        <tissue>Mammary gland</tissue>
        <tissue>Small intestine</tissue>
    </source>
</reference>
<reference key="2">
    <citation type="journal article" date="2004" name="Genome Res.">
        <title>The status, quality, and expansion of the NIH full-length cDNA project: the Mammalian Gene Collection (MGC).</title>
        <authorList>
            <consortium name="The MGC Project Team"/>
        </authorList>
    </citation>
    <scope>NUCLEOTIDE SEQUENCE [LARGE SCALE MRNA]</scope>
    <source>
        <strain>C57BL/6J</strain>
        <tissue>Brain</tissue>
    </source>
</reference>
<reference key="3">
    <citation type="journal article" date="2010" name="Cell">
        <title>A tissue-specific atlas of mouse protein phosphorylation and expression.</title>
        <authorList>
            <person name="Huttlin E.L."/>
            <person name="Jedrychowski M.P."/>
            <person name="Elias J.E."/>
            <person name="Goswami T."/>
            <person name="Rad R."/>
            <person name="Beausoleil S.A."/>
            <person name="Villen J."/>
            <person name="Haas W."/>
            <person name="Sowa M.E."/>
            <person name="Gygi S.P."/>
        </authorList>
    </citation>
    <scope>IDENTIFICATION BY MASS SPECTROMETRY [LARGE SCALE ANALYSIS]</scope>
    <source>
        <tissue>Brain</tissue>
        <tissue>Brown adipose tissue</tissue>
        <tissue>Heart</tissue>
        <tissue>Kidney</tissue>
        <tissue>Liver</tissue>
        <tissue>Lung</tissue>
        <tissue>Pancreas</tissue>
        <tissue>Spleen</tissue>
        <tissue>Testis</tissue>
    </source>
</reference>
<proteinExistence type="evidence at protein level"/>
<protein>
    <recommendedName>
        <fullName>Actin-related protein 2/3 complex subunit 5</fullName>
    </recommendedName>
    <alternativeName>
        <fullName>Arp2/3 complex 16 kDa subunit</fullName>
        <shortName>p16-ARC</shortName>
    </alternativeName>
</protein>
<feature type="initiator methionine" description="Removed" evidence="1">
    <location>
        <position position="1"/>
    </location>
</feature>
<feature type="chain" id="PRO_0000124055" description="Actin-related protein 2/3 complex subunit 5">
    <location>
        <begin position="2"/>
        <end position="151"/>
    </location>
</feature>
<feature type="region of interest" description="Disordered" evidence="2">
    <location>
        <begin position="21"/>
        <end position="44"/>
    </location>
</feature>
<feature type="modified residue" description="N-acetylserine" evidence="1">
    <location>
        <position position="2"/>
    </location>
</feature>
<feature type="sequence conflict" description="In Ref. 1; BAB25457." evidence="3" ref="1">
    <original>L</original>
    <variation>Q</variation>
    <location>
        <position position="59"/>
    </location>
</feature>
<gene>
    <name type="primary">Arpc5</name>
</gene>
<comment type="function">
    <text evidence="1">Component of the Arp2/3 complex, a multiprotein complex that mediates actin polymerization upon stimulation by nucleation-promoting factor (NPF). The Arp2/3 complex mediates the formation of branched actin networks in the cytoplasm, providing the force for cell motility. In addition to its role in the cytoplasmic cytoskeleton, the Arp2/3 complex also promotes actin polymerization in the nucleus, thereby regulating gene transcription and repair of damaged DNA. The Arp2/3 complex promotes homologous recombination (HR) repair in response to DNA damage by promoting nuclear actin polymerization, leading to drive motility of double-strand breaks (DSBs).</text>
</comment>
<comment type="subunit">
    <text evidence="1">Component of the Arp2/3 complex composed of ACTR2/ARP2, ACTR3/ARP3, ARPC1B/p41-ARC, ARPC2/p34-ARC, ARPC3/p21-ARC, ARPC4/p20-ARC and ARPC5/p16-ARC.</text>
</comment>
<comment type="subcellular location">
    <subcellularLocation>
        <location evidence="1">Cytoplasm</location>
        <location evidence="1">Cytoskeleton</location>
    </subcellularLocation>
    <subcellularLocation>
        <location evidence="1">Cell projection</location>
    </subcellularLocation>
    <subcellularLocation>
        <location evidence="1">Nucleus</location>
    </subcellularLocation>
</comment>
<comment type="PTM">
    <text evidence="1">Polyubiquitinated by RNF128 with 'Lys-63'-linked chains, leading to proteasomal degradation.</text>
</comment>
<comment type="similarity">
    <text evidence="3">Belongs to the ARPC5 family.</text>
</comment>
<accession>Q9CPW4</accession>
<accession>Q3U9T3</accession>
<accession>Q9D8E7</accession>
<organism>
    <name type="scientific">Mus musculus</name>
    <name type="common">Mouse</name>
    <dbReference type="NCBI Taxonomy" id="10090"/>
    <lineage>
        <taxon>Eukaryota</taxon>
        <taxon>Metazoa</taxon>
        <taxon>Chordata</taxon>
        <taxon>Craniata</taxon>
        <taxon>Vertebrata</taxon>
        <taxon>Euteleostomi</taxon>
        <taxon>Mammalia</taxon>
        <taxon>Eutheria</taxon>
        <taxon>Euarchontoglires</taxon>
        <taxon>Glires</taxon>
        <taxon>Rodentia</taxon>
        <taxon>Myomorpha</taxon>
        <taxon>Muroidea</taxon>
        <taxon>Muridae</taxon>
        <taxon>Murinae</taxon>
        <taxon>Mus</taxon>
        <taxon>Mus</taxon>
    </lineage>
</organism>
<dbReference type="EMBL" id="AK008097">
    <property type="protein sequence ID" value="BAB25457.1"/>
    <property type="molecule type" value="mRNA"/>
</dbReference>
<dbReference type="EMBL" id="AK011348">
    <property type="protein sequence ID" value="BAB27558.1"/>
    <property type="molecule type" value="mRNA"/>
</dbReference>
<dbReference type="EMBL" id="AK011911">
    <property type="protein sequence ID" value="BAB27911.1"/>
    <property type="molecule type" value="mRNA"/>
</dbReference>
<dbReference type="EMBL" id="AK017669">
    <property type="protein sequence ID" value="BAB30864.1"/>
    <property type="molecule type" value="mRNA"/>
</dbReference>
<dbReference type="EMBL" id="AK019149">
    <property type="protein sequence ID" value="BAB31570.1"/>
    <property type="molecule type" value="mRNA"/>
</dbReference>
<dbReference type="EMBL" id="AK087427">
    <property type="protein sequence ID" value="BAC39870.1"/>
    <property type="molecule type" value="mRNA"/>
</dbReference>
<dbReference type="EMBL" id="AK149756">
    <property type="protein sequence ID" value="BAE29064.1"/>
    <property type="molecule type" value="mRNA"/>
</dbReference>
<dbReference type="EMBL" id="AK151654">
    <property type="protein sequence ID" value="BAE30583.1"/>
    <property type="molecule type" value="mRNA"/>
</dbReference>
<dbReference type="EMBL" id="AK151656">
    <property type="protein sequence ID" value="BAE30585.1"/>
    <property type="molecule type" value="mRNA"/>
</dbReference>
<dbReference type="EMBL" id="AK152281">
    <property type="protein sequence ID" value="BAE31095.1"/>
    <property type="molecule type" value="mRNA"/>
</dbReference>
<dbReference type="EMBL" id="AK153262">
    <property type="protein sequence ID" value="BAE31852.1"/>
    <property type="molecule type" value="mRNA"/>
</dbReference>
<dbReference type="EMBL" id="AK159407">
    <property type="protein sequence ID" value="BAE35058.1"/>
    <property type="molecule type" value="mRNA"/>
</dbReference>
<dbReference type="EMBL" id="AK159438">
    <property type="protein sequence ID" value="BAE35084.1"/>
    <property type="molecule type" value="mRNA"/>
</dbReference>
<dbReference type="EMBL" id="AK159738">
    <property type="protein sequence ID" value="BAE35332.1"/>
    <property type="molecule type" value="mRNA"/>
</dbReference>
<dbReference type="EMBL" id="AK166284">
    <property type="protein sequence ID" value="BAE38681.1"/>
    <property type="molecule type" value="mRNA"/>
</dbReference>
<dbReference type="EMBL" id="AK166335">
    <property type="protein sequence ID" value="BAE38714.1"/>
    <property type="molecule type" value="mRNA"/>
</dbReference>
<dbReference type="EMBL" id="AK166725">
    <property type="protein sequence ID" value="BAE38972.1"/>
    <property type="molecule type" value="mRNA"/>
</dbReference>
<dbReference type="EMBL" id="AK167916">
    <property type="protein sequence ID" value="BAE39923.1"/>
    <property type="molecule type" value="mRNA"/>
</dbReference>
<dbReference type="EMBL" id="AK168264">
    <property type="protein sequence ID" value="BAE40212.1"/>
    <property type="molecule type" value="mRNA"/>
</dbReference>
<dbReference type="EMBL" id="AK168986">
    <property type="protein sequence ID" value="BAE40786.1"/>
    <property type="molecule type" value="mRNA"/>
</dbReference>
<dbReference type="EMBL" id="BC060143">
    <property type="protein sequence ID" value="AAH60143.1"/>
    <property type="molecule type" value="mRNA"/>
</dbReference>
<dbReference type="CCDS" id="CCDS35739.1"/>
<dbReference type="RefSeq" id="NP_080645.2">
    <property type="nucleotide sequence ID" value="NM_026369.2"/>
</dbReference>
<dbReference type="PDB" id="7AQK">
    <property type="method" value="EM"/>
    <property type="resolution" value="9.00 A"/>
    <property type="chains" value="g=1-151"/>
</dbReference>
<dbReference type="PDBsum" id="7AQK"/>
<dbReference type="EMDB" id="EMD-11869"/>
<dbReference type="SMR" id="Q9CPW4"/>
<dbReference type="BioGRID" id="212431">
    <property type="interactions" value="17"/>
</dbReference>
<dbReference type="DIP" id="DIP-60589N"/>
<dbReference type="FunCoup" id="Q9CPW4">
    <property type="interactions" value="1879"/>
</dbReference>
<dbReference type="IntAct" id="Q9CPW4">
    <property type="interactions" value="3"/>
</dbReference>
<dbReference type="STRING" id="10090.ENSMUSP00000076933"/>
<dbReference type="iPTMnet" id="Q9CPW4"/>
<dbReference type="MetOSite" id="Q9CPW4"/>
<dbReference type="PhosphoSitePlus" id="Q9CPW4"/>
<dbReference type="SwissPalm" id="Q9CPW4"/>
<dbReference type="jPOST" id="Q9CPW4"/>
<dbReference type="PaxDb" id="10090-ENSMUSP00000076933"/>
<dbReference type="ProteomicsDB" id="281835"/>
<dbReference type="Pumba" id="Q9CPW4"/>
<dbReference type="TopDownProteomics" id="Q9CPW4"/>
<dbReference type="Antibodypedia" id="34448">
    <property type="antibodies" value="190 antibodies from 30 providers"/>
</dbReference>
<dbReference type="DNASU" id="67771"/>
<dbReference type="Ensembl" id="ENSMUST00000077755.11">
    <property type="protein sequence ID" value="ENSMUSP00000076933.6"/>
    <property type="gene ID" value="ENSMUSG00000008475.14"/>
</dbReference>
<dbReference type="GeneID" id="67771"/>
<dbReference type="KEGG" id="mmu:67771"/>
<dbReference type="UCSC" id="uc007czj.2">
    <property type="organism name" value="mouse"/>
</dbReference>
<dbReference type="AGR" id="MGI:1915021"/>
<dbReference type="CTD" id="10092"/>
<dbReference type="MGI" id="MGI:1915021">
    <property type="gene designation" value="Arpc5"/>
</dbReference>
<dbReference type="VEuPathDB" id="HostDB:ENSMUSG00000008475"/>
<dbReference type="eggNOG" id="KOG3380">
    <property type="taxonomic scope" value="Eukaryota"/>
</dbReference>
<dbReference type="GeneTree" id="ENSGT00940000154654"/>
<dbReference type="HOGENOM" id="CLU_101888_1_1_1"/>
<dbReference type="InParanoid" id="Q9CPW4"/>
<dbReference type="OMA" id="GMGCIMR"/>
<dbReference type="OrthoDB" id="429520at2759"/>
<dbReference type="PhylomeDB" id="Q9CPW4"/>
<dbReference type="TreeFam" id="TF319716"/>
<dbReference type="Reactome" id="R-MMU-2029482">
    <property type="pathway name" value="Regulation of actin dynamics for phagocytic cup formation"/>
</dbReference>
<dbReference type="Reactome" id="R-MMU-3928662">
    <property type="pathway name" value="EPHB-mediated forward signaling"/>
</dbReference>
<dbReference type="Reactome" id="R-MMU-5663213">
    <property type="pathway name" value="RHO GTPases Activate WASPs and WAVEs"/>
</dbReference>
<dbReference type="Reactome" id="R-MMU-6798695">
    <property type="pathway name" value="Neutrophil degranulation"/>
</dbReference>
<dbReference type="Reactome" id="R-MMU-8856828">
    <property type="pathway name" value="Clathrin-mediated endocytosis"/>
</dbReference>
<dbReference type="BioGRID-ORCS" id="67771">
    <property type="hits" value="0 hits in 75 CRISPR screens"/>
</dbReference>
<dbReference type="ChiTaRS" id="Arpc5">
    <property type="organism name" value="mouse"/>
</dbReference>
<dbReference type="PRO" id="PR:Q9CPW4"/>
<dbReference type="Proteomes" id="UP000000589">
    <property type="component" value="Chromosome 1"/>
</dbReference>
<dbReference type="RNAct" id="Q9CPW4">
    <property type="molecule type" value="protein"/>
</dbReference>
<dbReference type="Bgee" id="ENSMUSG00000008475">
    <property type="expression patterns" value="Expressed in granulocyte and 65 other cell types or tissues"/>
</dbReference>
<dbReference type="ExpressionAtlas" id="Q9CPW4">
    <property type="expression patterns" value="baseline and differential"/>
</dbReference>
<dbReference type="GO" id="GO:0005885">
    <property type="term" value="C:Arp2/3 protein complex"/>
    <property type="evidence" value="ECO:0000250"/>
    <property type="project" value="UniProtKB"/>
</dbReference>
<dbReference type="GO" id="GO:0005737">
    <property type="term" value="C:cytoplasm"/>
    <property type="evidence" value="ECO:0007669"/>
    <property type="project" value="UniProtKB-KW"/>
</dbReference>
<dbReference type="GO" id="GO:0030027">
    <property type="term" value="C:lamellipodium"/>
    <property type="evidence" value="ECO:0000314"/>
    <property type="project" value="MGI"/>
</dbReference>
<dbReference type="GO" id="GO:0005634">
    <property type="term" value="C:nucleus"/>
    <property type="evidence" value="ECO:0000250"/>
    <property type="project" value="UniProtKB"/>
</dbReference>
<dbReference type="GO" id="GO:0035861">
    <property type="term" value="C:site of double-strand break"/>
    <property type="evidence" value="ECO:0000250"/>
    <property type="project" value="UniProtKB"/>
</dbReference>
<dbReference type="GO" id="GO:0051015">
    <property type="term" value="F:actin filament binding"/>
    <property type="evidence" value="ECO:0007669"/>
    <property type="project" value="Ensembl"/>
</dbReference>
<dbReference type="GO" id="GO:0005200">
    <property type="term" value="F:structural constituent of cytoskeleton"/>
    <property type="evidence" value="ECO:0007669"/>
    <property type="project" value="Ensembl"/>
</dbReference>
<dbReference type="GO" id="GO:0034314">
    <property type="term" value="P:Arp2/3 complex-mediated actin nucleation"/>
    <property type="evidence" value="ECO:0007669"/>
    <property type="project" value="Ensembl"/>
</dbReference>
<dbReference type="GO" id="GO:0016477">
    <property type="term" value="P:cell migration"/>
    <property type="evidence" value="ECO:0007669"/>
    <property type="project" value="Ensembl"/>
</dbReference>
<dbReference type="GO" id="GO:0030833">
    <property type="term" value="P:regulation of actin filament polymerization"/>
    <property type="evidence" value="ECO:0007669"/>
    <property type="project" value="InterPro"/>
</dbReference>
<dbReference type="FunFam" id="1.25.40.190:FF:000001">
    <property type="entry name" value="Actin-related protein 2/3 complex subunit 5"/>
    <property type="match status" value="1"/>
</dbReference>
<dbReference type="Gene3D" id="1.25.40.190">
    <property type="entry name" value="Actin-related protein 2/3 complex subunit 5"/>
    <property type="match status" value="1"/>
</dbReference>
<dbReference type="InterPro" id="IPR006789">
    <property type="entry name" value="ARPC5"/>
</dbReference>
<dbReference type="InterPro" id="IPR036743">
    <property type="entry name" value="ARPC5_sf"/>
</dbReference>
<dbReference type="PANTHER" id="PTHR12644">
    <property type="entry name" value="ARP2/3 COMPLEX 16 KD SUBUNIT P16-ARC"/>
    <property type="match status" value="1"/>
</dbReference>
<dbReference type="Pfam" id="PF04699">
    <property type="entry name" value="P16-Arc"/>
    <property type="match status" value="1"/>
</dbReference>
<dbReference type="PIRSF" id="PIRSF039096">
    <property type="entry name" value="p16-ARC"/>
    <property type="match status" value="1"/>
</dbReference>
<dbReference type="SUPFAM" id="SSF69103">
    <property type="entry name" value="Arp2/3 complex 16 kDa subunit ARPC5"/>
    <property type="match status" value="1"/>
</dbReference>
<name>ARPC5_MOUSE</name>
<sequence length="151" mass="16288">MSKNTVSSARFRKVDVDEYDENKFVDEEDGGDGQAGPDEGEVDSCLRQGNMTAALQAALKNPPINTKSQAVKDRAGSIVLKVLISFKANDIEKAVQSLDKNGVDLLMKYIYKGFESPSDNSSAVLLQWHEKALAAGGVGSIVRVLTARKTV</sequence>
<keyword id="KW-0002">3D-structure</keyword>
<keyword id="KW-0007">Acetylation</keyword>
<keyword id="KW-0009">Actin-binding</keyword>
<keyword id="KW-0966">Cell projection</keyword>
<keyword id="KW-0963">Cytoplasm</keyword>
<keyword id="KW-0206">Cytoskeleton</keyword>
<keyword id="KW-0539">Nucleus</keyword>
<keyword id="KW-1185">Reference proteome</keyword>
<keyword id="KW-0832">Ubl conjugation</keyword>